<evidence type="ECO:0000255" key="1">
    <source>
        <dbReference type="HAMAP-Rule" id="MF_00400"/>
    </source>
</evidence>
<feature type="chain" id="PRO_1000049614" description="Multidrug resistance protein MdtK">
    <location>
        <begin position="1"/>
        <end position="457"/>
    </location>
</feature>
<feature type="transmembrane region" description="Helical" evidence="1">
    <location>
        <begin position="11"/>
        <end position="31"/>
    </location>
</feature>
<feature type="transmembrane region" description="Helical" evidence="1">
    <location>
        <begin position="53"/>
        <end position="73"/>
    </location>
</feature>
<feature type="transmembrane region" description="Helical" evidence="1">
    <location>
        <begin position="93"/>
        <end position="113"/>
    </location>
</feature>
<feature type="transmembrane region" description="Helical" evidence="1">
    <location>
        <begin position="127"/>
        <end position="147"/>
    </location>
</feature>
<feature type="transmembrane region" description="Helical" evidence="1">
    <location>
        <begin position="160"/>
        <end position="180"/>
    </location>
</feature>
<feature type="transmembrane region" description="Helical" evidence="1">
    <location>
        <begin position="191"/>
        <end position="211"/>
    </location>
</feature>
<feature type="transmembrane region" description="Helical" evidence="1">
    <location>
        <begin position="243"/>
        <end position="263"/>
    </location>
</feature>
<feature type="transmembrane region" description="Helical" evidence="1">
    <location>
        <begin position="276"/>
        <end position="296"/>
    </location>
</feature>
<feature type="transmembrane region" description="Helical" evidence="1">
    <location>
        <begin position="316"/>
        <end position="336"/>
    </location>
</feature>
<feature type="transmembrane region" description="Helical" evidence="1">
    <location>
        <begin position="357"/>
        <end position="377"/>
    </location>
</feature>
<feature type="transmembrane region" description="Helical" evidence="1">
    <location>
        <begin position="387"/>
        <end position="407"/>
    </location>
</feature>
<feature type="transmembrane region" description="Helical" evidence="1">
    <location>
        <begin position="418"/>
        <end position="438"/>
    </location>
</feature>
<comment type="function">
    <text evidence="1">Multidrug efflux pump that functions probably as a Na(+)/drug antiporter.</text>
</comment>
<comment type="subcellular location">
    <subcellularLocation>
        <location evidence="1">Cell inner membrane</location>
        <topology evidence="1">Multi-pass membrane protein</topology>
    </subcellularLocation>
</comment>
<comment type="similarity">
    <text evidence="1">Belongs to the multi antimicrobial extrusion (MATE) (TC 2.A.66.1) family. MdtK subfamily.</text>
</comment>
<accession>A6TA11</accession>
<gene>
    <name evidence="1" type="primary">mdtK</name>
    <name type="ordered locus">KPN78578_19710</name>
    <name type="ORF">KPN_02001</name>
</gene>
<dbReference type="EMBL" id="CP000647">
    <property type="protein sequence ID" value="ABR77432.1"/>
    <property type="molecule type" value="Genomic_DNA"/>
</dbReference>
<dbReference type="RefSeq" id="WP_004148609.1">
    <property type="nucleotide sequence ID" value="NC_009648.1"/>
</dbReference>
<dbReference type="SMR" id="A6TA11"/>
<dbReference type="STRING" id="272620.KPN_02001"/>
<dbReference type="PaxDb" id="272620-KPN_02001"/>
<dbReference type="EnsemblBacteria" id="ABR77432">
    <property type="protein sequence ID" value="ABR77432"/>
    <property type="gene ID" value="KPN_02001"/>
</dbReference>
<dbReference type="KEGG" id="kpn:KPN_02001"/>
<dbReference type="HOGENOM" id="CLU_012893_6_0_6"/>
<dbReference type="Proteomes" id="UP000000265">
    <property type="component" value="Chromosome"/>
</dbReference>
<dbReference type="GO" id="GO:0005886">
    <property type="term" value="C:plasma membrane"/>
    <property type="evidence" value="ECO:0007669"/>
    <property type="project" value="UniProtKB-SubCell"/>
</dbReference>
<dbReference type="GO" id="GO:0015297">
    <property type="term" value="F:antiporter activity"/>
    <property type="evidence" value="ECO:0007669"/>
    <property type="project" value="UniProtKB-UniRule"/>
</dbReference>
<dbReference type="GO" id="GO:0042910">
    <property type="term" value="F:xenobiotic transmembrane transporter activity"/>
    <property type="evidence" value="ECO:0007669"/>
    <property type="project" value="UniProtKB-UniRule"/>
</dbReference>
<dbReference type="GO" id="GO:0006814">
    <property type="term" value="P:sodium ion transport"/>
    <property type="evidence" value="ECO:0007669"/>
    <property type="project" value="UniProtKB-UniRule"/>
</dbReference>
<dbReference type="GO" id="GO:0006855">
    <property type="term" value="P:xenobiotic transmembrane transport"/>
    <property type="evidence" value="ECO:0007669"/>
    <property type="project" value="UniProtKB-UniRule"/>
</dbReference>
<dbReference type="CDD" id="cd13131">
    <property type="entry name" value="MATE_NorM_like"/>
    <property type="match status" value="1"/>
</dbReference>
<dbReference type="HAMAP" id="MF_00400">
    <property type="entry name" value="MdtK"/>
    <property type="match status" value="1"/>
</dbReference>
<dbReference type="InterPro" id="IPR002528">
    <property type="entry name" value="MATE_fam"/>
</dbReference>
<dbReference type="InterPro" id="IPR050222">
    <property type="entry name" value="MATE_MdtK"/>
</dbReference>
<dbReference type="InterPro" id="IPR048279">
    <property type="entry name" value="MdtK-like"/>
</dbReference>
<dbReference type="InterPro" id="IPR022913">
    <property type="entry name" value="Multidrug-R_MdtK"/>
</dbReference>
<dbReference type="NCBIfam" id="TIGR00797">
    <property type="entry name" value="matE"/>
    <property type="match status" value="1"/>
</dbReference>
<dbReference type="PANTHER" id="PTHR43298:SF2">
    <property type="entry name" value="FMN_FAD EXPORTER YEEO-RELATED"/>
    <property type="match status" value="1"/>
</dbReference>
<dbReference type="PANTHER" id="PTHR43298">
    <property type="entry name" value="MULTIDRUG RESISTANCE PROTEIN NORM-RELATED"/>
    <property type="match status" value="1"/>
</dbReference>
<dbReference type="Pfam" id="PF01554">
    <property type="entry name" value="MatE"/>
    <property type="match status" value="2"/>
</dbReference>
<dbReference type="PIRSF" id="PIRSF006603">
    <property type="entry name" value="DinF"/>
    <property type="match status" value="1"/>
</dbReference>
<organism>
    <name type="scientific">Klebsiella pneumoniae subsp. pneumoniae (strain ATCC 700721 / MGH 78578)</name>
    <dbReference type="NCBI Taxonomy" id="272620"/>
    <lineage>
        <taxon>Bacteria</taxon>
        <taxon>Pseudomonadati</taxon>
        <taxon>Pseudomonadota</taxon>
        <taxon>Gammaproteobacteria</taxon>
        <taxon>Enterobacterales</taxon>
        <taxon>Enterobacteriaceae</taxon>
        <taxon>Klebsiella/Raoultella group</taxon>
        <taxon>Klebsiella</taxon>
        <taxon>Klebsiella pneumoniae complex</taxon>
    </lineage>
</organism>
<protein>
    <recommendedName>
        <fullName evidence="1">Multidrug resistance protein MdtK</fullName>
    </recommendedName>
    <alternativeName>
        <fullName evidence="1">Multidrug-efflux transporter</fullName>
    </alternativeName>
</protein>
<sequence>MQKYFVEARQLLALAIPVILAQVAQTAMGFVDTVMAGGYSATDMAAVAIGTSIWLPAILFGHGLLLALTPVVAQLNGSGRRERIAPQVRQGFWLAGFVSVLIMVVLWNAGYIISSMHNIDPLLAEKAVGYLRALLWGAPGYLFFQVARNQCEGLAKTKPGMVMGFIGLLVNIPVNYIFIYGHFGMPELGGVGCGVATASVYWVMFASMLWWVRRARTMRDIRCAERFSGPDFAVLLRLVQLGLPIALALFFEVTLFAVVALLVSPLGIIDVAGHQIALNFSSLMFVLPLSLAAAVTIRVGFRLGQGSTIDAQVSARTGVGVGVCLAVFTAIFTVLMRKQIALLYNDNPEVVTLASHLMLLAAIYQISDSIQVIGSGILRGYKDTRSIFFITFTAYWVLGLPSGYLLALTDMIVPRMGPAGFWCGFIIGLTSAAIMMMLRMRFLQRQPSSIILQRAAR</sequence>
<proteinExistence type="inferred from homology"/>
<name>MDTK_KLEP7</name>
<reference key="1">
    <citation type="submission" date="2006-09" db="EMBL/GenBank/DDBJ databases">
        <authorList>
            <consortium name="The Klebsiella pneumonia Genome Sequencing Project"/>
            <person name="McClelland M."/>
            <person name="Sanderson E.K."/>
            <person name="Spieth J."/>
            <person name="Clifton W.S."/>
            <person name="Latreille P."/>
            <person name="Sabo A."/>
            <person name="Pepin K."/>
            <person name="Bhonagiri V."/>
            <person name="Porwollik S."/>
            <person name="Ali J."/>
            <person name="Wilson R.K."/>
        </authorList>
    </citation>
    <scope>NUCLEOTIDE SEQUENCE [LARGE SCALE GENOMIC DNA]</scope>
    <source>
        <strain>ATCC 700721 / MGH 78578</strain>
    </source>
</reference>
<keyword id="KW-0050">Antiport</keyword>
<keyword id="KW-0997">Cell inner membrane</keyword>
<keyword id="KW-1003">Cell membrane</keyword>
<keyword id="KW-0406">Ion transport</keyword>
<keyword id="KW-0472">Membrane</keyword>
<keyword id="KW-0915">Sodium</keyword>
<keyword id="KW-0739">Sodium transport</keyword>
<keyword id="KW-0812">Transmembrane</keyword>
<keyword id="KW-1133">Transmembrane helix</keyword>
<keyword id="KW-0813">Transport</keyword>